<reference key="1">
    <citation type="submission" date="2006-12" db="EMBL/GenBank/DDBJ databases">
        <title>Complete sequence of Pyrobaculum islandicum DSM 4184.</title>
        <authorList>
            <person name="Copeland A."/>
            <person name="Lucas S."/>
            <person name="Lapidus A."/>
            <person name="Barry K."/>
            <person name="Detter J.C."/>
            <person name="Glavina del Rio T."/>
            <person name="Dalin E."/>
            <person name="Tice H."/>
            <person name="Pitluck S."/>
            <person name="Meincke L."/>
            <person name="Brettin T."/>
            <person name="Bruce D."/>
            <person name="Han C."/>
            <person name="Tapia R."/>
            <person name="Gilna P."/>
            <person name="Schmutz J."/>
            <person name="Larimer F."/>
            <person name="Land M."/>
            <person name="Hauser L."/>
            <person name="Kyrpides N."/>
            <person name="Mikhailova N."/>
            <person name="Cozen A.E."/>
            <person name="Fitz-Gibbon S.T."/>
            <person name="House C.H."/>
            <person name="Saltikov C."/>
            <person name="Lowe T."/>
            <person name="Richardson P."/>
        </authorList>
    </citation>
    <scope>NUCLEOTIDE SEQUENCE [LARGE SCALE GENOMIC DNA]</scope>
    <source>
        <strain>DSM 4184 / JCM 9189 / GEO3</strain>
    </source>
</reference>
<sequence>MNTFGREFRITTFGESHGKAIGVVIDGVPAGLELTEEDIKRELERRMFCHIPVLNPRCEPEEVEILSGVKEGYTQGTPIAVVIWNRRVISSYYEELWMKPRPGHADFAYYLKYGRYYDHRGGGRASGRTTAAVVAAGAVAKKILALAGAEVAGHIVELGGVEINASYTYEDVKKSWERPLPVVDQQALDKMLEKIQEAAARGDSIGGGVEVWAVGVPPGLGEPHFGKIKADIAAAAFSIPGAIALDWGMGRALAKMWGSEANDPITVANGRPTLATNKIGGVLGGITVGTPIYFRVWFKPTPSVRKPQQTVDLAKMEPTTIEFKGRYDVSIVPKALVALEAITAVTLADHLLRAGLIRRDKPLEK</sequence>
<gene>
    <name evidence="1" type="primary">aroC</name>
    <name type="ordered locus">Pisl_1763</name>
</gene>
<accession>A1RVD1</accession>
<keyword id="KW-0028">Amino-acid biosynthesis</keyword>
<keyword id="KW-0057">Aromatic amino acid biosynthesis</keyword>
<keyword id="KW-0274">FAD</keyword>
<keyword id="KW-0285">Flavoprotein</keyword>
<keyword id="KW-0288">FMN</keyword>
<keyword id="KW-0456">Lyase</keyword>
<keyword id="KW-0521">NADP</keyword>
<proteinExistence type="inferred from homology"/>
<protein>
    <recommendedName>
        <fullName evidence="1">Chorismate synthase</fullName>
        <shortName evidence="1">CS</shortName>
        <ecNumber evidence="1">4.2.3.5</ecNumber>
    </recommendedName>
    <alternativeName>
        <fullName evidence="1">5-enolpyruvylshikimate-3-phosphate phospholyase</fullName>
    </alternativeName>
</protein>
<name>AROC_PYRIL</name>
<organism>
    <name type="scientific">Pyrobaculum islandicum (strain DSM 4184 / JCM 9189 / GEO3)</name>
    <dbReference type="NCBI Taxonomy" id="384616"/>
    <lineage>
        <taxon>Archaea</taxon>
        <taxon>Thermoproteota</taxon>
        <taxon>Thermoprotei</taxon>
        <taxon>Thermoproteales</taxon>
        <taxon>Thermoproteaceae</taxon>
        <taxon>Pyrobaculum</taxon>
    </lineage>
</organism>
<feature type="chain" id="PRO_0000322438" description="Chorismate synthase">
    <location>
        <begin position="1"/>
        <end position="365"/>
    </location>
</feature>
<feature type="binding site" evidence="1">
    <location>
        <position position="46"/>
    </location>
    <ligand>
        <name>NADP(+)</name>
        <dbReference type="ChEBI" id="CHEBI:58349"/>
    </ligand>
</feature>
<feature type="binding site" evidence="1">
    <location>
        <begin position="124"/>
        <end position="126"/>
    </location>
    <ligand>
        <name>FMN</name>
        <dbReference type="ChEBI" id="CHEBI:58210"/>
    </ligand>
</feature>
<feature type="binding site" evidence="1">
    <location>
        <position position="284"/>
    </location>
    <ligand>
        <name>FMN</name>
        <dbReference type="ChEBI" id="CHEBI:58210"/>
    </ligand>
</feature>
<feature type="binding site" evidence="1">
    <location>
        <begin position="299"/>
        <end position="303"/>
    </location>
    <ligand>
        <name>FMN</name>
        <dbReference type="ChEBI" id="CHEBI:58210"/>
    </ligand>
</feature>
<feature type="binding site" evidence="1">
    <location>
        <position position="326"/>
    </location>
    <ligand>
        <name>FMN</name>
        <dbReference type="ChEBI" id="CHEBI:58210"/>
    </ligand>
</feature>
<evidence type="ECO:0000255" key="1">
    <source>
        <dbReference type="HAMAP-Rule" id="MF_00300"/>
    </source>
</evidence>
<comment type="function">
    <text evidence="1">Catalyzes the anti-1,4-elimination of the C-3 phosphate and the C-6 proR hydrogen from 5-enolpyruvylshikimate-3-phosphate (EPSP) to yield chorismate, which is the branch point compound that serves as the starting substrate for the three terminal pathways of aromatic amino acid biosynthesis. This reaction introduces a second double bond into the aromatic ring system.</text>
</comment>
<comment type="catalytic activity">
    <reaction evidence="1">
        <text>5-O-(1-carboxyvinyl)-3-phosphoshikimate = chorismate + phosphate</text>
        <dbReference type="Rhea" id="RHEA:21020"/>
        <dbReference type="ChEBI" id="CHEBI:29748"/>
        <dbReference type="ChEBI" id="CHEBI:43474"/>
        <dbReference type="ChEBI" id="CHEBI:57701"/>
        <dbReference type="EC" id="4.2.3.5"/>
    </reaction>
</comment>
<comment type="cofactor">
    <cofactor evidence="1">
        <name>FMNH2</name>
        <dbReference type="ChEBI" id="CHEBI:57618"/>
    </cofactor>
    <text evidence="1">Reduced FMN (FMNH(2)).</text>
</comment>
<comment type="pathway">
    <text evidence="1">Metabolic intermediate biosynthesis; chorismate biosynthesis; chorismate from D-erythrose 4-phosphate and phosphoenolpyruvate: step 7/7.</text>
</comment>
<comment type="similarity">
    <text evidence="1">Belongs to the chorismate synthase family.</text>
</comment>
<dbReference type="EC" id="4.2.3.5" evidence="1"/>
<dbReference type="EMBL" id="CP000504">
    <property type="protein sequence ID" value="ABL88913.1"/>
    <property type="molecule type" value="Genomic_DNA"/>
</dbReference>
<dbReference type="RefSeq" id="WP_011763488.1">
    <property type="nucleotide sequence ID" value="NC_008701.1"/>
</dbReference>
<dbReference type="SMR" id="A1RVD1"/>
<dbReference type="STRING" id="384616.Pisl_1763"/>
<dbReference type="GeneID" id="4617869"/>
<dbReference type="KEGG" id="pis:Pisl_1763"/>
<dbReference type="eggNOG" id="arCOG04133">
    <property type="taxonomic scope" value="Archaea"/>
</dbReference>
<dbReference type="HOGENOM" id="CLU_034547_0_0_2"/>
<dbReference type="OrthoDB" id="33049at2157"/>
<dbReference type="UniPathway" id="UPA00053">
    <property type="reaction ID" value="UER00090"/>
</dbReference>
<dbReference type="Proteomes" id="UP000002595">
    <property type="component" value="Chromosome"/>
</dbReference>
<dbReference type="GO" id="GO:0005829">
    <property type="term" value="C:cytosol"/>
    <property type="evidence" value="ECO:0007669"/>
    <property type="project" value="TreeGrafter"/>
</dbReference>
<dbReference type="GO" id="GO:0004107">
    <property type="term" value="F:chorismate synthase activity"/>
    <property type="evidence" value="ECO:0007669"/>
    <property type="project" value="UniProtKB-UniRule"/>
</dbReference>
<dbReference type="GO" id="GO:0010181">
    <property type="term" value="F:FMN binding"/>
    <property type="evidence" value="ECO:0007669"/>
    <property type="project" value="TreeGrafter"/>
</dbReference>
<dbReference type="GO" id="GO:0008652">
    <property type="term" value="P:amino acid biosynthetic process"/>
    <property type="evidence" value="ECO:0007669"/>
    <property type="project" value="UniProtKB-KW"/>
</dbReference>
<dbReference type="GO" id="GO:0009073">
    <property type="term" value="P:aromatic amino acid family biosynthetic process"/>
    <property type="evidence" value="ECO:0007669"/>
    <property type="project" value="UniProtKB-KW"/>
</dbReference>
<dbReference type="GO" id="GO:0009423">
    <property type="term" value="P:chorismate biosynthetic process"/>
    <property type="evidence" value="ECO:0007669"/>
    <property type="project" value="UniProtKB-UniRule"/>
</dbReference>
<dbReference type="CDD" id="cd07304">
    <property type="entry name" value="Chorismate_synthase"/>
    <property type="match status" value="1"/>
</dbReference>
<dbReference type="Gene3D" id="3.60.150.10">
    <property type="entry name" value="Chorismate synthase AroC"/>
    <property type="match status" value="1"/>
</dbReference>
<dbReference type="HAMAP" id="MF_00300">
    <property type="entry name" value="Chorismate_synth"/>
    <property type="match status" value="1"/>
</dbReference>
<dbReference type="InterPro" id="IPR000453">
    <property type="entry name" value="Chorismate_synth"/>
</dbReference>
<dbReference type="InterPro" id="IPR035904">
    <property type="entry name" value="Chorismate_synth_AroC_sf"/>
</dbReference>
<dbReference type="InterPro" id="IPR020541">
    <property type="entry name" value="Chorismate_synthase_CS"/>
</dbReference>
<dbReference type="NCBIfam" id="TIGR00033">
    <property type="entry name" value="aroC"/>
    <property type="match status" value="1"/>
</dbReference>
<dbReference type="NCBIfam" id="NF003793">
    <property type="entry name" value="PRK05382.1"/>
    <property type="match status" value="1"/>
</dbReference>
<dbReference type="PANTHER" id="PTHR21085">
    <property type="entry name" value="CHORISMATE SYNTHASE"/>
    <property type="match status" value="1"/>
</dbReference>
<dbReference type="PANTHER" id="PTHR21085:SF0">
    <property type="entry name" value="CHORISMATE SYNTHASE"/>
    <property type="match status" value="1"/>
</dbReference>
<dbReference type="Pfam" id="PF01264">
    <property type="entry name" value="Chorismate_synt"/>
    <property type="match status" value="1"/>
</dbReference>
<dbReference type="PIRSF" id="PIRSF001456">
    <property type="entry name" value="Chorismate_synth"/>
    <property type="match status" value="1"/>
</dbReference>
<dbReference type="SUPFAM" id="SSF103263">
    <property type="entry name" value="Chorismate synthase, AroC"/>
    <property type="match status" value="1"/>
</dbReference>
<dbReference type="PROSITE" id="PS00787">
    <property type="entry name" value="CHORISMATE_SYNTHASE_1"/>
    <property type="match status" value="1"/>
</dbReference>
<dbReference type="PROSITE" id="PS00788">
    <property type="entry name" value="CHORISMATE_SYNTHASE_2"/>
    <property type="match status" value="1"/>
</dbReference>